<name>OPSD_APIME</name>
<reference key="1">
    <citation type="journal article" date="1996" name="Gene">
        <title>Cloning of the gene encoding honeybee long-wavelength rhodopsin: a new class of insect visual pigments.</title>
        <authorList>
            <person name="Chang B.S.W."/>
            <person name="Ayers D."/>
            <person name="Smith W.C."/>
            <person name="Pierce N.E."/>
        </authorList>
    </citation>
    <scope>NUCLEOTIDE SEQUENCE [MRNA]</scope>
</reference>
<accession>Q17053</accession>
<feature type="chain" id="PRO_0000197637" description="Rhodopsin, long-wavelength">
    <location>
        <begin position="1"/>
        <end position="377"/>
    </location>
</feature>
<feature type="topological domain" description="Extracellular" evidence="2">
    <location>
        <begin position="1"/>
        <end position="51"/>
    </location>
</feature>
<feature type="transmembrane region" description="Helical; Name=1" evidence="2">
    <location>
        <begin position="52"/>
        <end position="76"/>
    </location>
</feature>
<feature type="topological domain" description="Cytoplasmic" evidence="2">
    <location>
        <begin position="77"/>
        <end position="88"/>
    </location>
</feature>
<feature type="transmembrane region" description="Helical; Name=2" evidence="2">
    <location>
        <begin position="89"/>
        <end position="113"/>
    </location>
</feature>
<feature type="topological domain" description="Extracellular" evidence="2">
    <location>
        <begin position="114"/>
        <end position="128"/>
    </location>
</feature>
<feature type="transmembrane region" description="Helical; Name=3" evidence="2">
    <location>
        <begin position="129"/>
        <end position="148"/>
    </location>
</feature>
<feature type="topological domain" description="Cytoplasmic" evidence="2">
    <location>
        <begin position="149"/>
        <end position="167"/>
    </location>
</feature>
<feature type="transmembrane region" description="Helical; Name=4" evidence="2">
    <location>
        <begin position="168"/>
        <end position="191"/>
    </location>
</feature>
<feature type="topological domain" description="Extracellular" evidence="2">
    <location>
        <begin position="192"/>
        <end position="215"/>
    </location>
</feature>
<feature type="transmembrane region" description="Helical; Name=5" evidence="2">
    <location>
        <begin position="216"/>
        <end position="243"/>
    </location>
</feature>
<feature type="topological domain" description="Cytoplasmic" evidence="2">
    <location>
        <begin position="244"/>
        <end position="278"/>
    </location>
</feature>
<feature type="transmembrane region" description="Helical; Name=6" evidence="2">
    <location>
        <begin position="279"/>
        <end position="302"/>
    </location>
</feature>
<feature type="topological domain" description="Extracellular" evidence="2">
    <location>
        <begin position="303"/>
        <end position="309"/>
    </location>
</feature>
<feature type="transmembrane region" description="Helical; Name=7" evidence="2">
    <location>
        <begin position="310"/>
        <end position="334"/>
    </location>
</feature>
<feature type="topological domain" description="Cytoplasmic" evidence="2">
    <location>
        <begin position="335"/>
        <end position="377"/>
    </location>
</feature>
<feature type="region of interest" description="Disordered" evidence="4">
    <location>
        <begin position="357"/>
        <end position="377"/>
    </location>
</feature>
<feature type="compositionally biased region" description="Low complexity" evidence="4">
    <location>
        <begin position="357"/>
        <end position="370"/>
    </location>
</feature>
<feature type="modified residue" description="N6-(retinylidene)lysine" evidence="1">
    <location>
        <position position="321"/>
    </location>
</feature>
<feature type="glycosylation site" description="N-linked (GlcNAc...) asparagine" evidence="2">
    <location>
        <position position="22"/>
    </location>
</feature>
<feature type="glycosylation site" description="N-linked (GlcNAc...) asparagine" evidence="2">
    <location>
        <position position="198"/>
    </location>
</feature>
<feature type="disulfide bond" evidence="3">
    <location>
        <begin position="125"/>
        <end position="202"/>
    </location>
</feature>
<comment type="function">
    <text>Visual pigments are the light-absorbing molecules that mediate vision. They consist of an apoprotein, opsin, covalently linked to 11-cis-retinal.</text>
</comment>
<comment type="biophysicochemical properties">
    <absorption>
        <max>526 nm</max>
    </absorption>
</comment>
<comment type="subcellular location">
    <subcellularLocation>
        <location>Membrane</location>
        <topology>Multi-pass membrane protein</topology>
    </subcellularLocation>
</comment>
<comment type="PTM">
    <text evidence="1">Phosphorylated on some or all of the serine and threonine residues present in the C-terminal region.</text>
</comment>
<comment type="similarity">
    <text evidence="3">Belongs to the G-protein coupled receptor 1 family. Opsin subfamily.</text>
</comment>
<evidence type="ECO:0000250" key="1"/>
<evidence type="ECO:0000255" key="2"/>
<evidence type="ECO:0000255" key="3">
    <source>
        <dbReference type="PROSITE-ProRule" id="PRU00521"/>
    </source>
</evidence>
<evidence type="ECO:0000256" key="4">
    <source>
        <dbReference type="SAM" id="MobiDB-lite"/>
    </source>
</evidence>
<organism>
    <name type="scientific">Apis mellifera</name>
    <name type="common">Honeybee</name>
    <dbReference type="NCBI Taxonomy" id="7460"/>
    <lineage>
        <taxon>Eukaryota</taxon>
        <taxon>Metazoa</taxon>
        <taxon>Ecdysozoa</taxon>
        <taxon>Arthropoda</taxon>
        <taxon>Hexapoda</taxon>
        <taxon>Insecta</taxon>
        <taxon>Pterygota</taxon>
        <taxon>Neoptera</taxon>
        <taxon>Endopterygota</taxon>
        <taxon>Hymenoptera</taxon>
        <taxon>Apocrita</taxon>
        <taxon>Aculeata</taxon>
        <taxon>Apoidea</taxon>
        <taxon>Anthophila</taxon>
        <taxon>Apidae</taxon>
        <taxon>Apis</taxon>
    </lineage>
</organism>
<protein>
    <recommendedName>
        <fullName>Rhodopsin, long-wavelength</fullName>
    </recommendedName>
    <alternativeName>
        <fullName>Opsin, green-sensitive</fullName>
    </alternativeName>
</protein>
<proteinExistence type="evidence at protein level"/>
<sequence>MIAVSGPSYEAFSYGGQARFNNQTVVDKVPPDMLHLIDANWYQYPPLNPMWHGILGFVIGMLGFVSAMGNGMVVYIFLSTKSLRTPSNLFVINLAISNFLMMFCMSPPMVINCYYETWVLGPLFCQIYAMLGSLFGCGSIWTMTMIAFDRYNVIVKGLSGKPLSINGALIRIIAIWLFSLGWTIAPMFGWNRYVPEGNMTACGTDYFNRGLLSASYLVCYGIWVYFVPLFLIIYSYWFIIQAVAAHEKNMREQAKKMNVASLRSSENQNTSAECKLAKVALMTISLWFMAWTPYLVINFSGIFNLVKISPLFTIWGSLFAKANAVYNPIVYGISHPKYRAALFAKFPSLACAAEPSSDAVSTTSGTTTVTDNEKSNA</sequence>
<keyword id="KW-0157">Chromophore</keyword>
<keyword id="KW-1015">Disulfide bond</keyword>
<keyword id="KW-0297">G-protein coupled receptor</keyword>
<keyword id="KW-0325">Glycoprotein</keyword>
<keyword id="KW-0472">Membrane</keyword>
<keyword id="KW-0597">Phosphoprotein</keyword>
<keyword id="KW-0600">Photoreceptor protein</keyword>
<keyword id="KW-0675">Receptor</keyword>
<keyword id="KW-1185">Reference proteome</keyword>
<keyword id="KW-0681">Retinal protein</keyword>
<keyword id="KW-0716">Sensory transduction</keyword>
<keyword id="KW-0807">Transducer</keyword>
<keyword id="KW-0812">Transmembrane</keyword>
<keyword id="KW-1133">Transmembrane helix</keyword>
<keyword id="KW-0844">Vision</keyword>
<dbReference type="EMBL" id="U26026">
    <property type="protein sequence ID" value="AAA69069.1"/>
    <property type="molecule type" value="mRNA"/>
</dbReference>
<dbReference type="PIR" id="JC4933">
    <property type="entry name" value="JC4933"/>
</dbReference>
<dbReference type="RefSeq" id="NP_001011639.2">
    <property type="nucleotide sequence ID" value="NM_001011639.2"/>
</dbReference>
<dbReference type="SMR" id="Q17053"/>
<dbReference type="FunCoup" id="Q17053">
    <property type="interactions" value="17"/>
</dbReference>
<dbReference type="STRING" id="7460.Q17053"/>
<dbReference type="PaxDb" id="7460-GB50196-PA"/>
<dbReference type="GeneID" id="413961"/>
<dbReference type="KEGG" id="ame:413961"/>
<dbReference type="CTD" id="100122456"/>
<dbReference type="eggNOG" id="KOG3656">
    <property type="taxonomic scope" value="Eukaryota"/>
</dbReference>
<dbReference type="InParanoid" id="Q17053"/>
<dbReference type="OrthoDB" id="9996086at2759"/>
<dbReference type="Proteomes" id="UP000005203">
    <property type="component" value="Linkage group LG15"/>
</dbReference>
<dbReference type="GO" id="GO:0005886">
    <property type="term" value="C:plasma membrane"/>
    <property type="evidence" value="ECO:0000250"/>
    <property type="project" value="UniProtKB"/>
</dbReference>
<dbReference type="GO" id="GO:0004930">
    <property type="term" value="F:G protein-coupled receptor activity"/>
    <property type="evidence" value="ECO:0007669"/>
    <property type="project" value="UniProtKB-KW"/>
</dbReference>
<dbReference type="GO" id="GO:0009881">
    <property type="term" value="F:photoreceptor activity"/>
    <property type="evidence" value="ECO:0007669"/>
    <property type="project" value="UniProtKB-KW"/>
</dbReference>
<dbReference type="GO" id="GO:0007602">
    <property type="term" value="P:phototransduction"/>
    <property type="evidence" value="ECO:0007669"/>
    <property type="project" value="UniProtKB-KW"/>
</dbReference>
<dbReference type="GO" id="GO:0007601">
    <property type="term" value="P:visual perception"/>
    <property type="evidence" value="ECO:0007669"/>
    <property type="project" value="UniProtKB-KW"/>
</dbReference>
<dbReference type="CDD" id="cd15079">
    <property type="entry name" value="7tmA_photoreceptors_insect"/>
    <property type="match status" value="1"/>
</dbReference>
<dbReference type="FunFam" id="1.20.1070.10:FF:000044">
    <property type="entry name" value="Opsin, ultraviolet-sensitive"/>
    <property type="match status" value="1"/>
</dbReference>
<dbReference type="Gene3D" id="1.20.1070.10">
    <property type="entry name" value="Rhodopsin 7-helix transmembrane proteins"/>
    <property type="match status" value="1"/>
</dbReference>
<dbReference type="InterPro" id="IPR050125">
    <property type="entry name" value="GPCR_opsins"/>
</dbReference>
<dbReference type="InterPro" id="IPR000276">
    <property type="entry name" value="GPCR_Rhodpsn"/>
</dbReference>
<dbReference type="InterPro" id="IPR017452">
    <property type="entry name" value="GPCR_Rhodpsn_7TM"/>
</dbReference>
<dbReference type="InterPro" id="IPR001760">
    <property type="entry name" value="Opsin"/>
</dbReference>
<dbReference type="InterPro" id="IPR001391">
    <property type="entry name" value="Opsin_lateye"/>
</dbReference>
<dbReference type="InterPro" id="IPR027430">
    <property type="entry name" value="Retinal_BS"/>
</dbReference>
<dbReference type="PANTHER" id="PTHR24240">
    <property type="entry name" value="OPSIN"/>
    <property type="match status" value="1"/>
</dbReference>
<dbReference type="Pfam" id="PF00001">
    <property type="entry name" value="7tm_1"/>
    <property type="match status" value="1"/>
</dbReference>
<dbReference type="PRINTS" id="PR00237">
    <property type="entry name" value="GPCRRHODOPSN"/>
</dbReference>
<dbReference type="PRINTS" id="PR00238">
    <property type="entry name" value="OPSIN"/>
</dbReference>
<dbReference type="PRINTS" id="PR00578">
    <property type="entry name" value="OPSINLTRLEYE"/>
</dbReference>
<dbReference type="SUPFAM" id="SSF81321">
    <property type="entry name" value="Family A G protein-coupled receptor-like"/>
    <property type="match status" value="1"/>
</dbReference>
<dbReference type="PROSITE" id="PS00237">
    <property type="entry name" value="G_PROTEIN_RECEP_F1_1"/>
    <property type="match status" value="1"/>
</dbReference>
<dbReference type="PROSITE" id="PS50262">
    <property type="entry name" value="G_PROTEIN_RECEP_F1_2"/>
    <property type="match status" value="1"/>
</dbReference>
<dbReference type="PROSITE" id="PS00238">
    <property type="entry name" value="OPSIN"/>
    <property type="match status" value="1"/>
</dbReference>